<reference key="1">
    <citation type="journal article" date="1999" name="J. Mol. Biol.">
        <title>Plant cyclotides: a unique family of cyclic and knotted proteins that defines the cyclic cystine knot structural motif.</title>
        <authorList>
            <person name="Craik D.J."/>
            <person name="Daly N.L."/>
            <person name="Bond T."/>
            <person name="Waine C."/>
        </authorList>
    </citation>
    <scope>PROTEIN SEQUENCE</scope>
    <scope>STRUCTURE BY NMR</scope>
</reference>
<reference key="2">
    <citation type="journal article" date="2006" name="Biochem. J.">
        <title>A novel suite of cyclotides from Viola odorata: sequence variation and the implications for structure, function and stability.</title>
        <authorList>
            <person name="Ireland D.C."/>
            <person name="Colgrave M.L."/>
            <person name="Craik D.J."/>
        </authorList>
    </citation>
    <scope>PROTEIN SEQUENCE</scope>
    <scope>MASS SPECTROMETRY</scope>
</reference>
<reference key="3">
    <citation type="journal article" date="2017" name="J. Nat. Prod.">
        <title>Cyclotides from the Indian Medicinal Plant Viola odorata (Banafsha): Identification and Characterization.</title>
        <authorList>
            <person name="Narayani M."/>
            <person name="Chadha A."/>
            <person name="Srivastava S."/>
        </authorList>
    </citation>
    <scope>TISSUE SPECIFICITY</scope>
    <scope>IDENTIFICATION BY MASS SPECTROMETRY</scope>
</reference>
<reference key="4">
    <citation type="journal article" date="2003" name="J. Biol. Chem.">
        <title>Twists, knots, and rings in proteins. Structural definition of the cyclotide framework.</title>
        <authorList>
            <person name="Rosengren K.J."/>
            <person name="Daly N.L."/>
            <person name="Plan M.R.R."/>
            <person name="Waine C."/>
            <person name="Craik D.J."/>
        </authorList>
    </citation>
    <scope>STRUCTURE BY NMR</scope>
</reference>
<proteinExistence type="evidence at protein level"/>
<comment type="function">
    <text>Probably participates in a plant defense mechanism.</text>
</comment>
<comment type="tissue specificity">
    <text evidence="3">Expressed in leaves, petals, petioles and roots but not in runners (at protein level).</text>
</comment>
<comment type="domain">
    <text>The presence of a 'disulfide through disulfide knot' structurally defines this protein as a knottin.</text>
</comment>
<comment type="PTM">
    <text>This is a cyclic peptide.</text>
</comment>
<comment type="mass spectrometry" mass="3114.4" method="MALDI" evidence="2"/>
<comment type="similarity">
    <text evidence="1">Belongs to the cyclotide family. Bracelet subfamily.</text>
</comment>
<comment type="caution">
    <text evidence="4">This peptide is cyclic. The start position was chosen by similarity to OAK1 (kalata-B1) for which the DNA sequence is known.</text>
</comment>
<evidence type="ECO:0000255" key="1">
    <source>
        <dbReference type="PROSITE-ProRule" id="PRU00395"/>
    </source>
</evidence>
<evidence type="ECO:0000269" key="2">
    <source>
    </source>
</evidence>
<evidence type="ECO:0000269" key="3">
    <source>
    </source>
</evidence>
<evidence type="ECO:0000305" key="4"/>
<evidence type="ECO:0007829" key="5">
    <source>
        <dbReference type="PDB" id="1DF6"/>
    </source>
</evidence>
<feature type="peptide" id="PRO_0000043609" description="Cycloviolacin-O1">
    <location>
        <begin position="1"/>
        <end position="30"/>
    </location>
</feature>
<feature type="disulfide bond">
    <location>
        <begin position="4"/>
        <end position="21"/>
    </location>
</feature>
<feature type="disulfide bond">
    <location>
        <begin position="8"/>
        <end position="23"/>
    </location>
</feature>
<feature type="disulfide bond">
    <location>
        <begin position="13"/>
        <end position="28"/>
    </location>
</feature>
<feature type="cross-link" description="Cyclopeptide (Gly-Asn)">
    <location>
        <begin position="1"/>
        <end position="30"/>
    </location>
</feature>
<feature type="strand" evidence="5">
    <location>
        <begin position="9"/>
        <end position="11"/>
    </location>
</feature>
<feature type="helix" evidence="5">
    <location>
        <begin position="17"/>
        <end position="19"/>
    </location>
</feature>
<feature type="strand" evidence="5">
    <location>
        <begin position="22"/>
        <end position="24"/>
    </location>
</feature>
<feature type="strand" evidence="5">
    <location>
        <begin position="27"/>
        <end position="30"/>
    </location>
</feature>
<dbReference type="PDB" id="1DF6">
    <property type="method" value="NMR"/>
    <property type="chains" value="A=7-30"/>
</dbReference>
<dbReference type="PDB" id="1NBJ">
    <property type="method" value="NMR"/>
    <property type="chains" value="A=4-30"/>
</dbReference>
<dbReference type="PDBsum" id="1DF6"/>
<dbReference type="PDBsum" id="1NBJ"/>
<dbReference type="SMR" id="P82230"/>
<dbReference type="EvolutionaryTrace" id="P82230"/>
<dbReference type="GO" id="GO:0006952">
    <property type="term" value="P:defense response"/>
    <property type="evidence" value="ECO:0007669"/>
    <property type="project" value="UniProtKB-KW"/>
</dbReference>
<dbReference type="InterPro" id="IPR005535">
    <property type="entry name" value="Cyclotide"/>
</dbReference>
<dbReference type="InterPro" id="IPR012323">
    <property type="entry name" value="Cyclotide_bracelet_CS"/>
</dbReference>
<dbReference type="InterPro" id="IPR036146">
    <property type="entry name" value="Cyclotide_sf"/>
</dbReference>
<dbReference type="Pfam" id="PF03784">
    <property type="entry name" value="Cyclotide"/>
    <property type="match status" value="1"/>
</dbReference>
<dbReference type="PIRSF" id="PIRSF037891">
    <property type="entry name" value="Cycloviolacin"/>
    <property type="match status" value="1"/>
</dbReference>
<dbReference type="SUPFAM" id="SSF57038">
    <property type="entry name" value="Cyclotides"/>
    <property type="match status" value="1"/>
</dbReference>
<dbReference type="PROSITE" id="PS51052">
    <property type="entry name" value="CYCLOTIDE"/>
    <property type="match status" value="1"/>
</dbReference>
<dbReference type="PROSITE" id="PS60008">
    <property type="entry name" value="CYCLOTIDE_BRACELET"/>
    <property type="match status" value="1"/>
</dbReference>
<accession>P82230</accession>
<organism>
    <name type="scientific">Viola odorata</name>
    <name type="common">Sweet violet</name>
    <dbReference type="NCBI Taxonomy" id="97441"/>
    <lineage>
        <taxon>Eukaryota</taxon>
        <taxon>Viridiplantae</taxon>
        <taxon>Streptophyta</taxon>
        <taxon>Embryophyta</taxon>
        <taxon>Tracheophyta</taxon>
        <taxon>Spermatophyta</taxon>
        <taxon>Magnoliopsida</taxon>
        <taxon>eudicotyledons</taxon>
        <taxon>Gunneridae</taxon>
        <taxon>Pentapetalae</taxon>
        <taxon>rosids</taxon>
        <taxon>fabids</taxon>
        <taxon>Malpighiales</taxon>
        <taxon>Violaceae</taxon>
        <taxon>Viola</taxon>
        <taxon>Viola subgen. Viola</taxon>
        <taxon>Viola sect. Viola</taxon>
        <taxon>Viola subsect. Viola</taxon>
    </lineage>
</organism>
<name>CYO1_VIOOD</name>
<protein>
    <recommendedName>
        <fullName>Cycloviolacin-O1</fullName>
    </recommendedName>
</protein>
<keyword id="KW-0002">3D-structure</keyword>
<keyword id="KW-0903">Direct protein sequencing</keyword>
<keyword id="KW-1015">Disulfide bond</keyword>
<keyword id="KW-0960">Knottin</keyword>
<keyword id="KW-0611">Plant defense</keyword>
<sequence length="30" mass="3141">GIPCAESCVYIPCTVTALLGCSCSNRVCYN</sequence>